<protein>
    <recommendedName>
        <fullName evidence="1">Protein translocase subunit SecA</fullName>
        <ecNumber evidence="1">7.4.2.8</ecNumber>
    </recommendedName>
</protein>
<organism>
    <name type="scientific">Orientia tsutsugamushi (strain Boryong)</name>
    <name type="common">Rickettsia tsutsugamushi</name>
    <dbReference type="NCBI Taxonomy" id="357244"/>
    <lineage>
        <taxon>Bacteria</taxon>
        <taxon>Pseudomonadati</taxon>
        <taxon>Pseudomonadota</taxon>
        <taxon>Alphaproteobacteria</taxon>
        <taxon>Rickettsiales</taxon>
        <taxon>Rickettsiaceae</taxon>
        <taxon>Rickettsieae</taxon>
        <taxon>Orientia</taxon>
    </lineage>
</organism>
<evidence type="ECO:0000255" key="1">
    <source>
        <dbReference type="HAMAP-Rule" id="MF_01382"/>
    </source>
</evidence>
<proteinExistence type="inferred from homology"/>
<reference key="1">
    <citation type="journal article" date="2007" name="Proc. Natl. Acad. Sci. U.S.A.">
        <title>The Orientia tsutsugamushi genome reveals massive proliferation of conjugative type IV secretion system and host-cell interaction genes.</title>
        <authorList>
            <person name="Cho N.-H."/>
            <person name="Kim H.-R."/>
            <person name="Lee J.-H."/>
            <person name="Kim S.-Y."/>
            <person name="Kim J."/>
            <person name="Cha S."/>
            <person name="Kim S.-Y."/>
            <person name="Darby A.C."/>
            <person name="Fuxelius H.-H."/>
            <person name="Yin J."/>
            <person name="Kim J.H."/>
            <person name="Kim J."/>
            <person name="Lee S.J."/>
            <person name="Koh Y.-S."/>
            <person name="Jang W.-J."/>
            <person name="Park K.-H."/>
            <person name="Andersson S.G.E."/>
            <person name="Choi M.-S."/>
            <person name="Kim I.-S."/>
        </authorList>
    </citation>
    <scope>NUCLEOTIDE SEQUENCE [LARGE SCALE GENOMIC DNA]</scope>
    <source>
        <strain>Boryong</strain>
    </source>
</reference>
<name>SECA_ORITB</name>
<accession>A5CD15</accession>
<feature type="chain" id="PRO_0000320879" description="Protein translocase subunit SecA">
    <location>
        <begin position="1"/>
        <end position="880"/>
    </location>
</feature>
<feature type="binding site" evidence="1">
    <location>
        <position position="87"/>
    </location>
    <ligand>
        <name>ATP</name>
        <dbReference type="ChEBI" id="CHEBI:30616"/>
    </ligand>
</feature>
<feature type="binding site" evidence="1">
    <location>
        <begin position="105"/>
        <end position="109"/>
    </location>
    <ligand>
        <name>ATP</name>
        <dbReference type="ChEBI" id="CHEBI:30616"/>
    </ligand>
</feature>
<feature type="binding site" evidence="1">
    <location>
        <position position="501"/>
    </location>
    <ligand>
        <name>ATP</name>
        <dbReference type="ChEBI" id="CHEBI:30616"/>
    </ligand>
</feature>
<feature type="binding site" evidence="1">
    <location>
        <position position="864"/>
    </location>
    <ligand>
        <name>Zn(2+)</name>
        <dbReference type="ChEBI" id="CHEBI:29105"/>
    </ligand>
</feature>
<feature type="binding site" evidence="1">
    <location>
        <position position="866"/>
    </location>
    <ligand>
        <name>Zn(2+)</name>
        <dbReference type="ChEBI" id="CHEBI:29105"/>
    </ligand>
</feature>
<feature type="binding site" evidence="1">
    <location>
        <position position="875"/>
    </location>
    <ligand>
        <name>Zn(2+)</name>
        <dbReference type="ChEBI" id="CHEBI:29105"/>
    </ligand>
</feature>
<feature type="binding site" evidence="1">
    <location>
        <position position="876"/>
    </location>
    <ligand>
        <name>Zn(2+)</name>
        <dbReference type="ChEBI" id="CHEBI:29105"/>
    </ligand>
</feature>
<sequence length="880" mass="100629">MMLKFIKSIFKTPSDRIIANLKSKIQQVHSAESSLAKLSNIELRNKTSEFKARLANNEPIDNIQYEAFAVVREAAKRTIGIQHYDEQLIGGILLHQGKVIEMSTGEGKTLVATLPSYLNALMGKGVHVVTVNDYLAQRDSDWMGTIHRFLDITVGCITSNTNEHARKIAYNSDITYITNNELGFDFLRDNMQFTNQSKVQRGCNYAIIDEIDSILIDEARTPLIISGPVSDNTSLYPIINKLITKLNKDDYEMDEKLRNVTLTDLGINKLETMLAEINILAPNSNSLYDFENMHLIHYINQSLKAHTLFRRNVDYLVKNGKVIIIDEFTGRTMDSRRYSEGLHQALEAKEKVEIQNENQTLASITFQNYFRMYTKLSGMTGTAMTEATELKEIYDLDVVTVPTHNPVQRIDYDDEIYSTKKDKYSAIIQLIQECYSKGQPVLVGTVSIEKSEELSKLLHSKKIPHNVLNAKHHDKEASIIAQAGRIKAITIATNMAGRGTDIMLGGNAEMLVDQSNLTEEEYQEKLKITKMQIEQEKEQVINAGGLFVIGTERHESRRIDNQLRGRCGRQGDPGQTKFFLSLEDDLMRIFASDRVTNILRTIGLKDGEAIHHPLINRSLATAQQKIEAQNYEIRKNLLKYDNVMNDQRKVIYEQRNEAISSDNVNEILHNLTEELIVETVHKFIPPKSYKEDWNIHGLVKEYHHIFNVKLQLDSIEATDSSLKVIEYLTKTAFDIYKQQEQDYSAKSANEAIKHIFIKTLDQTWKEHLYTLDHLKQGISLRAYGQKDPLNEYKREAFDLFKQMLLHLKYLFIQRVARLHIDLASSPKSTSSLLETSDNNLKSKIITENSMAHKYFGKISRNQLCPCNSGKKFKHCHGALK</sequence>
<comment type="function">
    <text evidence="1">Part of the Sec protein translocase complex. Interacts with the SecYEG preprotein conducting channel. Has a central role in coupling the hydrolysis of ATP to the transfer of proteins into and across the cell membrane, serving both as a receptor for the preprotein-SecB complex and as an ATP-driven molecular motor driving the stepwise translocation of polypeptide chains across the membrane.</text>
</comment>
<comment type="catalytic activity">
    <reaction evidence="1">
        <text>ATP + H2O + cellular proteinSide 1 = ADP + phosphate + cellular proteinSide 2.</text>
        <dbReference type="EC" id="7.4.2.8"/>
    </reaction>
</comment>
<comment type="cofactor">
    <cofactor evidence="1">
        <name>Zn(2+)</name>
        <dbReference type="ChEBI" id="CHEBI:29105"/>
    </cofactor>
    <text evidence="1">May bind 1 zinc ion per subunit.</text>
</comment>
<comment type="subunit">
    <text evidence="1">Monomer and homodimer. Part of the essential Sec protein translocation apparatus which comprises SecA, SecYEG and auxiliary proteins SecDF-YajC and YidC.</text>
</comment>
<comment type="subcellular location">
    <subcellularLocation>
        <location evidence="1">Cell inner membrane</location>
        <topology evidence="1">Peripheral membrane protein</topology>
        <orientation evidence="1">Cytoplasmic side</orientation>
    </subcellularLocation>
    <subcellularLocation>
        <location evidence="1">Cytoplasm</location>
    </subcellularLocation>
    <text evidence="1">Distribution is 50-50.</text>
</comment>
<comment type="similarity">
    <text evidence="1">Belongs to the SecA family.</text>
</comment>
<gene>
    <name evidence="1" type="primary">secA</name>
    <name type="ordered locus">OTBS_0586</name>
</gene>
<dbReference type="EC" id="7.4.2.8" evidence="1"/>
<dbReference type="EMBL" id="AM494475">
    <property type="protein sequence ID" value="CAM79652.1"/>
    <property type="molecule type" value="Genomic_DNA"/>
</dbReference>
<dbReference type="SMR" id="A5CD15"/>
<dbReference type="KEGG" id="ots:OTBS_0586"/>
<dbReference type="eggNOG" id="COG0653">
    <property type="taxonomic scope" value="Bacteria"/>
</dbReference>
<dbReference type="HOGENOM" id="CLU_005314_3_0_5"/>
<dbReference type="Proteomes" id="UP000001565">
    <property type="component" value="Chromosome"/>
</dbReference>
<dbReference type="GO" id="GO:0031522">
    <property type="term" value="C:cell envelope Sec protein transport complex"/>
    <property type="evidence" value="ECO:0007669"/>
    <property type="project" value="TreeGrafter"/>
</dbReference>
<dbReference type="GO" id="GO:0005829">
    <property type="term" value="C:cytosol"/>
    <property type="evidence" value="ECO:0007669"/>
    <property type="project" value="TreeGrafter"/>
</dbReference>
<dbReference type="GO" id="GO:0005886">
    <property type="term" value="C:plasma membrane"/>
    <property type="evidence" value="ECO:0007669"/>
    <property type="project" value="UniProtKB-SubCell"/>
</dbReference>
<dbReference type="GO" id="GO:0005524">
    <property type="term" value="F:ATP binding"/>
    <property type="evidence" value="ECO:0007669"/>
    <property type="project" value="UniProtKB-UniRule"/>
</dbReference>
<dbReference type="GO" id="GO:0046872">
    <property type="term" value="F:metal ion binding"/>
    <property type="evidence" value="ECO:0007669"/>
    <property type="project" value="UniProtKB-KW"/>
</dbReference>
<dbReference type="GO" id="GO:0008564">
    <property type="term" value="F:protein-exporting ATPase activity"/>
    <property type="evidence" value="ECO:0007669"/>
    <property type="project" value="UniProtKB-EC"/>
</dbReference>
<dbReference type="GO" id="GO:0065002">
    <property type="term" value="P:intracellular protein transmembrane transport"/>
    <property type="evidence" value="ECO:0007669"/>
    <property type="project" value="UniProtKB-UniRule"/>
</dbReference>
<dbReference type="GO" id="GO:0017038">
    <property type="term" value="P:protein import"/>
    <property type="evidence" value="ECO:0007669"/>
    <property type="project" value="InterPro"/>
</dbReference>
<dbReference type="GO" id="GO:0006605">
    <property type="term" value="P:protein targeting"/>
    <property type="evidence" value="ECO:0007669"/>
    <property type="project" value="UniProtKB-UniRule"/>
</dbReference>
<dbReference type="GO" id="GO:0043952">
    <property type="term" value="P:protein transport by the Sec complex"/>
    <property type="evidence" value="ECO:0007669"/>
    <property type="project" value="TreeGrafter"/>
</dbReference>
<dbReference type="CDD" id="cd17928">
    <property type="entry name" value="DEXDc_SecA"/>
    <property type="match status" value="1"/>
</dbReference>
<dbReference type="CDD" id="cd18803">
    <property type="entry name" value="SF2_C_secA"/>
    <property type="match status" value="1"/>
</dbReference>
<dbReference type="FunFam" id="3.40.50.300:FF:000113">
    <property type="entry name" value="Preprotein translocase subunit SecA"/>
    <property type="match status" value="1"/>
</dbReference>
<dbReference type="FunFam" id="3.90.1440.10:FF:000001">
    <property type="entry name" value="Preprotein translocase subunit SecA"/>
    <property type="match status" value="1"/>
</dbReference>
<dbReference type="Gene3D" id="1.10.3060.10">
    <property type="entry name" value="Helical scaffold and wing domains of SecA"/>
    <property type="match status" value="1"/>
</dbReference>
<dbReference type="Gene3D" id="3.40.50.300">
    <property type="entry name" value="P-loop containing nucleotide triphosphate hydrolases"/>
    <property type="match status" value="2"/>
</dbReference>
<dbReference type="Gene3D" id="3.90.1440.10">
    <property type="entry name" value="SecA, preprotein cross-linking domain"/>
    <property type="match status" value="1"/>
</dbReference>
<dbReference type="HAMAP" id="MF_01382">
    <property type="entry name" value="SecA"/>
    <property type="match status" value="1"/>
</dbReference>
<dbReference type="InterPro" id="IPR014001">
    <property type="entry name" value="Helicase_ATP-bd"/>
</dbReference>
<dbReference type="InterPro" id="IPR001650">
    <property type="entry name" value="Helicase_C-like"/>
</dbReference>
<dbReference type="InterPro" id="IPR027417">
    <property type="entry name" value="P-loop_NTPase"/>
</dbReference>
<dbReference type="InterPro" id="IPR004027">
    <property type="entry name" value="SEC_C_motif"/>
</dbReference>
<dbReference type="InterPro" id="IPR000185">
    <property type="entry name" value="SecA"/>
</dbReference>
<dbReference type="InterPro" id="IPR020937">
    <property type="entry name" value="SecA_CS"/>
</dbReference>
<dbReference type="InterPro" id="IPR011115">
    <property type="entry name" value="SecA_DEAD"/>
</dbReference>
<dbReference type="InterPro" id="IPR014018">
    <property type="entry name" value="SecA_motor_DEAD"/>
</dbReference>
<dbReference type="InterPro" id="IPR011130">
    <property type="entry name" value="SecA_preprotein_X-link_dom"/>
</dbReference>
<dbReference type="InterPro" id="IPR044722">
    <property type="entry name" value="SecA_SF2_C"/>
</dbReference>
<dbReference type="InterPro" id="IPR011116">
    <property type="entry name" value="SecA_Wing/Scaffold"/>
</dbReference>
<dbReference type="InterPro" id="IPR036266">
    <property type="entry name" value="SecA_Wing/Scaffold_sf"/>
</dbReference>
<dbReference type="InterPro" id="IPR036670">
    <property type="entry name" value="SecA_X-link_sf"/>
</dbReference>
<dbReference type="NCBIfam" id="NF009538">
    <property type="entry name" value="PRK12904.1"/>
    <property type="match status" value="1"/>
</dbReference>
<dbReference type="NCBIfam" id="TIGR00963">
    <property type="entry name" value="secA"/>
    <property type="match status" value="1"/>
</dbReference>
<dbReference type="PANTHER" id="PTHR30612:SF0">
    <property type="entry name" value="CHLOROPLAST PROTEIN-TRANSPORTING ATPASE"/>
    <property type="match status" value="1"/>
</dbReference>
<dbReference type="PANTHER" id="PTHR30612">
    <property type="entry name" value="SECA INNER MEMBRANE COMPONENT OF SEC PROTEIN SECRETION SYSTEM"/>
    <property type="match status" value="1"/>
</dbReference>
<dbReference type="Pfam" id="PF21090">
    <property type="entry name" value="P-loop_SecA"/>
    <property type="match status" value="1"/>
</dbReference>
<dbReference type="Pfam" id="PF02810">
    <property type="entry name" value="SEC-C"/>
    <property type="match status" value="1"/>
</dbReference>
<dbReference type="Pfam" id="PF07517">
    <property type="entry name" value="SecA_DEAD"/>
    <property type="match status" value="1"/>
</dbReference>
<dbReference type="Pfam" id="PF01043">
    <property type="entry name" value="SecA_PP_bind"/>
    <property type="match status" value="1"/>
</dbReference>
<dbReference type="Pfam" id="PF07516">
    <property type="entry name" value="SecA_SW"/>
    <property type="match status" value="1"/>
</dbReference>
<dbReference type="PRINTS" id="PR00906">
    <property type="entry name" value="SECA"/>
</dbReference>
<dbReference type="SMART" id="SM00957">
    <property type="entry name" value="SecA_DEAD"/>
    <property type="match status" value="1"/>
</dbReference>
<dbReference type="SMART" id="SM00958">
    <property type="entry name" value="SecA_PP_bind"/>
    <property type="match status" value="1"/>
</dbReference>
<dbReference type="SUPFAM" id="SSF81886">
    <property type="entry name" value="Helical scaffold and wing domains of SecA"/>
    <property type="match status" value="1"/>
</dbReference>
<dbReference type="SUPFAM" id="SSF52540">
    <property type="entry name" value="P-loop containing nucleoside triphosphate hydrolases"/>
    <property type="match status" value="2"/>
</dbReference>
<dbReference type="SUPFAM" id="SSF81767">
    <property type="entry name" value="Pre-protein crosslinking domain of SecA"/>
    <property type="match status" value="1"/>
</dbReference>
<dbReference type="PROSITE" id="PS01312">
    <property type="entry name" value="SECA"/>
    <property type="match status" value="1"/>
</dbReference>
<dbReference type="PROSITE" id="PS51196">
    <property type="entry name" value="SECA_MOTOR_DEAD"/>
    <property type="match status" value="1"/>
</dbReference>
<keyword id="KW-0067">ATP-binding</keyword>
<keyword id="KW-0997">Cell inner membrane</keyword>
<keyword id="KW-1003">Cell membrane</keyword>
<keyword id="KW-0963">Cytoplasm</keyword>
<keyword id="KW-0472">Membrane</keyword>
<keyword id="KW-0479">Metal-binding</keyword>
<keyword id="KW-0547">Nucleotide-binding</keyword>
<keyword id="KW-0653">Protein transport</keyword>
<keyword id="KW-1185">Reference proteome</keyword>
<keyword id="KW-1278">Translocase</keyword>
<keyword id="KW-0811">Translocation</keyword>
<keyword id="KW-0813">Transport</keyword>
<keyword id="KW-0862">Zinc</keyword>